<comment type="function">
    <text evidence="9 10">Required to protect lysosomal transporter MFSD1 from lysosomal proteolysis and for MFSD1 lysosomal localization.</text>
</comment>
<comment type="subunit">
    <text evidence="9 10">Interacts (via lumenal domain) with lysosomal protein MFSD1; the interaction starts while both proteins are still in the endoplasmic reticulum and is required for stabilization of MFSD1 in lysosomes but has no direct effect on its targeting to lysosomes or transporter activity.</text>
</comment>
<comment type="subcellular location">
    <subcellularLocation>
        <location evidence="4 9">Lysosome membrane</location>
        <topology evidence="1">Single-pass type I membrane protein</topology>
        <orientation evidence="11">Lumenal side</orientation>
    </subcellularLocation>
</comment>
<comment type="tissue specificity">
    <text evidence="2 4 5 7">Detected in brain, heart, liver, kidney, lung, intestine, testis and spleen (PubMed:11444019, PubMed:19489740, PubMed:24487409). Expressed at highest levels in kidney cortex (PubMed:11444019, PubMed:19489740). However, another study reports highest expression levels in lung (PubMed:24487409). Expressed in myoblasts with expression increasing during differentiation into myotubes (PubMed:26707125).</text>
</comment>
<comment type="developmental stage">
    <text evidence="2 8">Expressed throughout embryogenesis (PubMed:11444019). After birth, there is a rapid increase in expression within the first week of life, reaching adult levels by week 2 (PubMed:27141234).</text>
</comment>
<comment type="PTM">
    <text evidence="3 4 10">Highly N-glycosylated (PubMed:19349973, PubMed:19489740). N-glycosylation is essential for GLMP stability and for MFSD1 lysosomal localization (PubMed:32959924).</text>
</comment>
<comment type="disruption phenotype">
    <text evidence="5 6 7 8 9">Viable and fertile (PubMed:24487409). Significantly reduced levels of Mfsd1 (PubMed:31661432). Splenomegaly (PubMed:24487409, PubMed:26047317). Reduced size of epididymal fat pads (PubMed:26047317). Enlargement of liver and spontaneous development of liver fibrosis which is not present at birth but develops shortly after and reaches a peak at 4 months of age (PubMed:24487409, PubMed:26047317, PubMed:27141234). The liver phenotype is associated with increased expression of markers for inflammatory responses, apoptosis and oxidative stress (PubMed:24487409, PubMed:27141234). Livers show local foci where hepatocytes are lost and liver sinusoidal endothelial cells are replaced by ordinary capillary endothelium (PubMed:31661432). Reduced liver function (PubMed:27141234). Kupffer cells have increased accumulation of iron and lipofuscin (PubMed:24487409). Decreased blood glucose and serum lipids and increased liver triacylglycerol (PubMed:26047317). Altered liver expression of genes involved in metabolism including decreased expression of Acox1, Angptl4, Fabp1, Slc2a2/Glut2, Ppara, Plin2 and Plin5 and increased expression of Apoc3, Cd36, Fasn, Pdk4, Ppard, Pparg, Scd1 and Scd2 (PubMed:26047317). Increased liver expression of Pecam31/Cd31 and Vwf (PubMed:31661432). Increased glucose and fatty acid uptake in hepatocytes and increased glucose oxidation (PubMed:26047317). Increased de novo lipogenesis in hepatocytes (PubMed:26047317). Increased hepatocyte proliferation and oval cell mobilization up to 6 months of age (PubMed:27141234). Increased frequency of liver tumors after 12 months of age (PubMed:27141234). Anemia, thrombocytopenia, and reduced levels of white blood cells (PubMed:27141234). No effect on composition of muscle fibers but myotubes metabolize glucose faster and have a larger pool of intracellular glycogen while oleic acid uptake, storage and oxidation are significantly reduced (PubMed:26707125). Increased myotube expression of Myh2, Myh4 and Scd1 and decreased expression of Cd36, Myh7, Plin2, Ppara, Ppard, Pparg, Pgc1a and Scd2 (PubMed:26707125).</text>
</comment>
<comment type="similarity">
    <text evidence="11">Belongs to the GLMP family.</text>
</comment>
<sequence length="404" mass="43804">MFRCWGPHWGWVPCAPTPWLLLSLLVCSAPFGLQGEETRQVSMEVISGWPNPQNLLHIRAVGSNSTLHYVWSSLGPPAVVLVATNTTQSVLSVNWSLLLSPDPAGALMVLPKSSIQFSSALVFTRLLEFDSTNASEGAQPPGKPYPPYSLAKFSWNNITNSLDLANLSADFQGRPVDDPTGAFANGSLTFKVQAFSRSGRPAQPPRLLHTADVCQLEVALVGASPRGNHSLFGLEVATLGQGPDCPSVNERNSIDDEYAPAVFQLNQLLWGSSPSGFMQWRPVAFSEEERARESALPCQASTLHSTLASSLPHSPIVQAFFGSQNNFCAFNLTFGAPTGPGYWDQYYLCWSMLLGMGFPPVDIFSPLVLGIMAVALGAPGLMFLGGGLFLLLRHRRYSEYQSIN</sequence>
<gene>
    <name evidence="12" type="primary">Glmp</name>
</gene>
<feature type="signal peptide" evidence="1">
    <location>
        <begin position="1"/>
        <end position="35"/>
    </location>
</feature>
<feature type="chain" id="PRO_0000284485" description="Glycosylated lysosomal membrane protein" evidence="11">
    <location>
        <begin position="36"/>
        <end position="404"/>
    </location>
</feature>
<feature type="topological domain" description="Lumenal" evidence="1">
    <location>
        <begin position="36"/>
        <end position="370"/>
    </location>
</feature>
<feature type="transmembrane region" description="Helical" evidence="1">
    <location>
        <begin position="371"/>
        <end position="391"/>
    </location>
</feature>
<feature type="topological domain" description="Cytoplasmic" evidence="1">
    <location>
        <begin position="392"/>
        <end position="404"/>
    </location>
</feature>
<feature type="short sequence motif" description="Lysosomal targeting motif" evidence="4 10">
    <location>
        <begin position="400"/>
        <end position="404"/>
    </location>
</feature>
<feature type="glycosylation site" description="N-linked (GlcNAc...) asparagine" evidence="1">
    <location>
        <position position="64"/>
    </location>
</feature>
<feature type="glycosylation site" description="N-linked (GlcNAc...) asparagine" evidence="10">
    <location>
        <position position="85"/>
    </location>
</feature>
<feature type="glycosylation site" description="N-linked (GlcNAc...) asparagine" evidence="10">
    <location>
        <position position="94"/>
    </location>
</feature>
<feature type="glycosylation site" description="N-linked (GlcNAc...) asparagine" evidence="3 10">
    <location>
        <position position="133"/>
    </location>
</feature>
<feature type="glycosylation site" description="N-linked (GlcNAc...) asparagine" evidence="10">
    <location>
        <position position="157"/>
    </location>
</feature>
<feature type="glycosylation site" description="N-linked (GlcNAc...) asparagine" evidence="1">
    <location>
        <position position="166"/>
    </location>
</feature>
<feature type="glycosylation site" description="N-linked (GlcNAc...) asparagine" evidence="3 10">
    <location>
        <position position="185"/>
    </location>
</feature>
<feature type="glycosylation site" description="N-linked (GlcNAc...) asparagine" evidence="10">
    <location>
        <position position="228"/>
    </location>
</feature>
<feature type="glycosylation site" description="N-linked (GlcNAc...) asparagine" evidence="10">
    <location>
        <position position="331"/>
    </location>
</feature>
<feature type="mutagenesis site" description="Reduced glycosylation." evidence="10">
    <original>N</original>
    <variation>A</variation>
    <location>
        <position position="85"/>
    </location>
</feature>
<feature type="mutagenesis site" description="Reduced glycosylation." evidence="10">
    <original>N</original>
    <variation>A</variation>
    <location>
        <position position="94"/>
    </location>
</feature>
<feature type="mutagenesis site" description="Reduced glycosylation." evidence="10">
    <original>N</original>
    <variation>A</variation>
    <location>
        <position position="133"/>
    </location>
</feature>
<feature type="mutagenesis site" description="Reduced glycosylation." evidence="10">
    <original>N</original>
    <variation>A</variation>
    <location>
        <position position="157"/>
    </location>
</feature>
<feature type="mutagenesis site" description="No effect on glycosylation." evidence="10">
    <original>N</original>
    <variation>A</variation>
    <location>
        <position position="166"/>
    </location>
</feature>
<feature type="mutagenesis site" description="Reduced glycosylation." evidence="10">
    <original>N</original>
    <variation>A</variation>
    <location>
        <position position="185"/>
    </location>
</feature>
<feature type="mutagenesis site" description="Reduced glycosylation." evidence="10">
    <original>N</original>
    <variation>A</variation>
    <location>
        <position position="228"/>
    </location>
</feature>
<feature type="mutagenesis site" description="Reduced glycosylation." evidence="10">
    <original>N</original>
    <variation>A</variation>
    <location>
        <position position="331"/>
    </location>
</feature>
<feature type="mutagenesis site" description="Abolishes lysosomal localization and results in mislocalization to the cell surface. Localizes to lysosomes when expressed with wild-type MFSD1." evidence="4 10">
    <original>Y</original>
    <variation>A</variation>
    <location>
        <position position="400"/>
    </location>
</feature>
<feature type="sequence conflict" description="In Ref. 2; BAC35859." evidence="11" ref="2">
    <original>L</original>
    <variation>I</variation>
    <location>
        <position position="21"/>
    </location>
</feature>
<feature type="sequence conflict" description="In Ref. 2; BAE29857." evidence="11" ref="2">
    <original>P</original>
    <variation>T</variation>
    <location>
        <position position="52"/>
    </location>
</feature>
<feature type="strand" evidence="14">
    <location>
        <begin position="40"/>
        <end position="45"/>
    </location>
</feature>
<feature type="strand" evidence="14">
    <location>
        <begin position="49"/>
        <end position="51"/>
    </location>
</feature>
<feature type="strand" evidence="14">
    <location>
        <begin position="55"/>
        <end position="61"/>
    </location>
</feature>
<feature type="strand" evidence="14">
    <location>
        <begin position="66"/>
        <end position="72"/>
    </location>
</feature>
<feature type="strand" evidence="14">
    <location>
        <begin position="74"/>
        <end position="76"/>
    </location>
</feature>
<feature type="strand" evidence="14">
    <location>
        <begin position="78"/>
        <end position="85"/>
    </location>
</feature>
<feature type="strand" evidence="14">
    <location>
        <begin position="90"/>
        <end position="93"/>
    </location>
</feature>
<feature type="helix" evidence="14">
    <location>
        <begin position="95"/>
        <end position="98"/>
    </location>
</feature>
<feature type="strand" evidence="14">
    <location>
        <begin position="106"/>
        <end position="111"/>
    </location>
</feature>
<feature type="helix" evidence="14">
    <location>
        <begin position="112"/>
        <end position="114"/>
    </location>
</feature>
<feature type="strand" evidence="14">
    <location>
        <begin position="115"/>
        <end position="130"/>
    </location>
</feature>
<feature type="strand" evidence="14">
    <location>
        <begin position="139"/>
        <end position="144"/>
    </location>
</feature>
<feature type="helix" evidence="14">
    <location>
        <begin position="150"/>
        <end position="152"/>
    </location>
</feature>
<feature type="strand" evidence="14">
    <location>
        <begin position="153"/>
        <end position="155"/>
    </location>
</feature>
<feature type="turn" evidence="14">
    <location>
        <begin position="158"/>
        <end position="161"/>
    </location>
</feature>
<feature type="turn" evidence="14">
    <location>
        <begin position="164"/>
        <end position="167"/>
    </location>
</feature>
<feature type="strand" evidence="14">
    <location>
        <begin position="168"/>
        <end position="176"/>
    </location>
</feature>
<feature type="turn" evidence="14">
    <location>
        <begin position="182"/>
        <end position="185"/>
    </location>
</feature>
<feature type="strand" evidence="14">
    <location>
        <begin position="187"/>
        <end position="194"/>
    </location>
</feature>
<feature type="strand" evidence="14">
    <location>
        <begin position="213"/>
        <end position="222"/>
    </location>
</feature>
<feature type="strand" evidence="14">
    <location>
        <begin position="230"/>
        <end position="239"/>
    </location>
</feature>
<feature type="strand" evidence="14">
    <location>
        <begin position="241"/>
        <end position="244"/>
    </location>
</feature>
<feature type="helix" evidence="14">
    <location>
        <begin position="261"/>
        <end position="263"/>
    </location>
</feature>
<feature type="strand" evidence="14">
    <location>
        <begin position="266"/>
        <end position="280"/>
    </location>
</feature>
<feature type="strand" evidence="14">
    <location>
        <begin position="282"/>
        <end position="287"/>
    </location>
</feature>
<feature type="helix" evidence="14">
    <location>
        <begin position="292"/>
        <end position="294"/>
    </location>
</feature>
<feature type="strand" evidence="14">
    <location>
        <begin position="295"/>
        <end position="300"/>
    </location>
</feature>
<feature type="strand" evidence="14">
    <location>
        <begin position="304"/>
        <end position="306"/>
    </location>
</feature>
<feature type="helix" evidence="14">
    <location>
        <begin position="308"/>
        <end position="310"/>
    </location>
</feature>
<feature type="helix" evidence="14">
    <location>
        <begin position="315"/>
        <end position="321"/>
    </location>
</feature>
<feature type="strand" evidence="14">
    <location>
        <begin position="327"/>
        <end position="334"/>
    </location>
</feature>
<feature type="strand" evidence="14">
    <location>
        <begin position="337"/>
        <end position="340"/>
    </location>
</feature>
<feature type="turn" evidence="14">
    <location>
        <begin position="342"/>
        <end position="345"/>
    </location>
</feature>
<feature type="strand" evidence="14">
    <location>
        <begin position="346"/>
        <end position="358"/>
    </location>
</feature>
<protein>
    <recommendedName>
        <fullName evidence="12">Glycosylated lysosomal membrane protein</fullName>
    </recommendedName>
    <alternativeName>
        <fullName evidence="11">Lysosomal protein NCU-G1</fullName>
    </alternativeName>
</protein>
<proteinExistence type="evidence at protein level"/>
<reference key="1">
    <citation type="journal article" date="2001" name="Biochem. Genet.">
        <title>cDNA of a novel mRNA expressed predominantly in mouse kidney.</title>
        <authorList>
            <person name="Kawamura T."/>
            <person name="Kuroda N."/>
            <person name="Kimura Y."/>
            <person name="Lazoura E."/>
            <person name="Okada N."/>
            <person name="Okada H."/>
        </authorList>
    </citation>
    <scope>NUCLEOTIDE SEQUENCE [MRNA]</scope>
    <scope>TISSUE SPECIFICITY</scope>
    <scope>DEVELOPMENTAL STAGE</scope>
    <source>
        <strain>BALB/cJ</strain>
        <tissue>Liver</tissue>
    </source>
</reference>
<reference key="2">
    <citation type="journal article" date="2005" name="Science">
        <title>The transcriptional landscape of the mammalian genome.</title>
        <authorList>
            <person name="Carninci P."/>
            <person name="Kasukawa T."/>
            <person name="Katayama S."/>
            <person name="Gough J."/>
            <person name="Frith M.C."/>
            <person name="Maeda N."/>
            <person name="Oyama R."/>
            <person name="Ravasi T."/>
            <person name="Lenhard B."/>
            <person name="Wells C."/>
            <person name="Kodzius R."/>
            <person name="Shimokawa K."/>
            <person name="Bajic V.B."/>
            <person name="Brenner S.E."/>
            <person name="Batalov S."/>
            <person name="Forrest A.R."/>
            <person name="Zavolan M."/>
            <person name="Davis M.J."/>
            <person name="Wilming L.G."/>
            <person name="Aidinis V."/>
            <person name="Allen J.E."/>
            <person name="Ambesi-Impiombato A."/>
            <person name="Apweiler R."/>
            <person name="Aturaliya R.N."/>
            <person name="Bailey T.L."/>
            <person name="Bansal M."/>
            <person name="Baxter L."/>
            <person name="Beisel K.W."/>
            <person name="Bersano T."/>
            <person name="Bono H."/>
            <person name="Chalk A.M."/>
            <person name="Chiu K.P."/>
            <person name="Choudhary V."/>
            <person name="Christoffels A."/>
            <person name="Clutterbuck D.R."/>
            <person name="Crowe M.L."/>
            <person name="Dalla E."/>
            <person name="Dalrymple B.P."/>
            <person name="de Bono B."/>
            <person name="Della Gatta G."/>
            <person name="di Bernardo D."/>
            <person name="Down T."/>
            <person name="Engstrom P."/>
            <person name="Fagiolini M."/>
            <person name="Faulkner G."/>
            <person name="Fletcher C.F."/>
            <person name="Fukushima T."/>
            <person name="Furuno M."/>
            <person name="Futaki S."/>
            <person name="Gariboldi M."/>
            <person name="Georgii-Hemming P."/>
            <person name="Gingeras T.R."/>
            <person name="Gojobori T."/>
            <person name="Green R.E."/>
            <person name="Gustincich S."/>
            <person name="Harbers M."/>
            <person name="Hayashi Y."/>
            <person name="Hensch T.K."/>
            <person name="Hirokawa N."/>
            <person name="Hill D."/>
            <person name="Huminiecki L."/>
            <person name="Iacono M."/>
            <person name="Ikeo K."/>
            <person name="Iwama A."/>
            <person name="Ishikawa T."/>
            <person name="Jakt M."/>
            <person name="Kanapin A."/>
            <person name="Katoh M."/>
            <person name="Kawasawa Y."/>
            <person name="Kelso J."/>
            <person name="Kitamura H."/>
            <person name="Kitano H."/>
            <person name="Kollias G."/>
            <person name="Krishnan S.P."/>
            <person name="Kruger A."/>
            <person name="Kummerfeld S.K."/>
            <person name="Kurochkin I.V."/>
            <person name="Lareau L.F."/>
            <person name="Lazarevic D."/>
            <person name="Lipovich L."/>
            <person name="Liu J."/>
            <person name="Liuni S."/>
            <person name="McWilliam S."/>
            <person name="Madan Babu M."/>
            <person name="Madera M."/>
            <person name="Marchionni L."/>
            <person name="Matsuda H."/>
            <person name="Matsuzawa S."/>
            <person name="Miki H."/>
            <person name="Mignone F."/>
            <person name="Miyake S."/>
            <person name="Morris K."/>
            <person name="Mottagui-Tabar S."/>
            <person name="Mulder N."/>
            <person name="Nakano N."/>
            <person name="Nakauchi H."/>
            <person name="Ng P."/>
            <person name="Nilsson R."/>
            <person name="Nishiguchi S."/>
            <person name="Nishikawa S."/>
            <person name="Nori F."/>
            <person name="Ohara O."/>
            <person name="Okazaki Y."/>
            <person name="Orlando V."/>
            <person name="Pang K.C."/>
            <person name="Pavan W.J."/>
            <person name="Pavesi G."/>
            <person name="Pesole G."/>
            <person name="Petrovsky N."/>
            <person name="Piazza S."/>
            <person name="Reed J."/>
            <person name="Reid J.F."/>
            <person name="Ring B.Z."/>
            <person name="Ringwald M."/>
            <person name="Rost B."/>
            <person name="Ruan Y."/>
            <person name="Salzberg S.L."/>
            <person name="Sandelin A."/>
            <person name="Schneider C."/>
            <person name="Schoenbach C."/>
            <person name="Sekiguchi K."/>
            <person name="Semple C.A."/>
            <person name="Seno S."/>
            <person name="Sessa L."/>
            <person name="Sheng Y."/>
            <person name="Shibata Y."/>
            <person name="Shimada H."/>
            <person name="Shimada K."/>
            <person name="Silva D."/>
            <person name="Sinclair B."/>
            <person name="Sperling S."/>
            <person name="Stupka E."/>
            <person name="Sugiura K."/>
            <person name="Sultana R."/>
            <person name="Takenaka Y."/>
            <person name="Taki K."/>
            <person name="Tammoja K."/>
            <person name="Tan S.L."/>
            <person name="Tang S."/>
            <person name="Taylor M.S."/>
            <person name="Tegner J."/>
            <person name="Teichmann S.A."/>
            <person name="Ueda H.R."/>
            <person name="van Nimwegen E."/>
            <person name="Verardo R."/>
            <person name="Wei C.L."/>
            <person name="Yagi K."/>
            <person name="Yamanishi H."/>
            <person name="Zabarovsky E."/>
            <person name="Zhu S."/>
            <person name="Zimmer A."/>
            <person name="Hide W."/>
            <person name="Bult C."/>
            <person name="Grimmond S.M."/>
            <person name="Teasdale R.D."/>
            <person name="Liu E.T."/>
            <person name="Brusic V."/>
            <person name="Quackenbush J."/>
            <person name="Wahlestedt C."/>
            <person name="Mattick J.S."/>
            <person name="Hume D.A."/>
            <person name="Kai C."/>
            <person name="Sasaki D."/>
            <person name="Tomaru Y."/>
            <person name="Fukuda S."/>
            <person name="Kanamori-Katayama M."/>
            <person name="Suzuki M."/>
            <person name="Aoki J."/>
            <person name="Arakawa T."/>
            <person name="Iida J."/>
            <person name="Imamura K."/>
            <person name="Itoh M."/>
            <person name="Kato T."/>
            <person name="Kawaji H."/>
            <person name="Kawagashira N."/>
            <person name="Kawashima T."/>
            <person name="Kojima M."/>
            <person name="Kondo S."/>
            <person name="Konno H."/>
            <person name="Nakano K."/>
            <person name="Ninomiya N."/>
            <person name="Nishio T."/>
            <person name="Okada M."/>
            <person name="Plessy C."/>
            <person name="Shibata K."/>
            <person name="Shiraki T."/>
            <person name="Suzuki S."/>
            <person name="Tagami M."/>
            <person name="Waki K."/>
            <person name="Watahiki A."/>
            <person name="Okamura-Oho Y."/>
            <person name="Suzuki H."/>
            <person name="Kawai J."/>
            <person name="Hayashizaki Y."/>
        </authorList>
    </citation>
    <scope>NUCLEOTIDE SEQUENCE [LARGE SCALE MRNA]</scope>
    <source>
        <strain>C57BL/6J</strain>
        <strain>NOD</strain>
        <tissue>Bone marrow</tissue>
        <tissue>Dendritic cell</tissue>
        <tissue>Head</tissue>
        <tissue>Liver</tissue>
        <tissue>Spleen</tissue>
    </source>
</reference>
<reference key="3">
    <citation type="journal article" date="2004" name="Genome Res.">
        <title>The status, quality, and expansion of the NIH full-length cDNA project: the Mammalian Gene Collection (MGC).</title>
        <authorList>
            <consortium name="The MGC Project Team"/>
        </authorList>
    </citation>
    <scope>NUCLEOTIDE SEQUENCE [LARGE SCALE MRNA]</scope>
    <source>
        <tissue>Eye</tissue>
    </source>
</reference>
<reference key="4">
    <citation type="journal article" date="2009" name="Biochem. J.">
        <title>NCU-G1 is a highly glycosylated integral membrane protein of the lysosome.</title>
        <authorList>
            <person name="Schieweck O."/>
            <person name="Damme M."/>
            <person name="Schroeder B."/>
            <person name="Hasilik A."/>
            <person name="Schmidt B."/>
            <person name="Lubke T."/>
        </authorList>
    </citation>
    <scope>SUBCELLULAR LOCATION</scope>
    <scope>GLYCOSYLATION</scope>
    <scope>TISSUE SPECIFICITY</scope>
    <scope>MUTAGENESIS OF TYR-400</scope>
</reference>
<reference key="5">
    <citation type="journal article" date="2009" name="Nat. Biotechnol.">
        <title>Mass-spectrometric identification and relative quantification of N-linked cell surface glycoproteins.</title>
        <authorList>
            <person name="Wollscheid B."/>
            <person name="Bausch-Fluck D."/>
            <person name="Henderson C."/>
            <person name="O'Brien R."/>
            <person name="Bibel M."/>
            <person name="Schiess R."/>
            <person name="Aebersold R."/>
            <person name="Watts J.D."/>
        </authorList>
    </citation>
    <scope>GLYCOSYLATION [LARGE SCALE ANALYSIS] AT ASN-133 AND ASN-185</scope>
</reference>
<reference key="6">
    <citation type="journal article" date="2014" name="Dis. Model. Mech.">
        <title>Loss of lysosomal membrane protein NCU-G1 in mice results in spontaneous liver fibrosis with accumulation of lipofuscin and iron in Kupffer cells.</title>
        <authorList>
            <person name="Kong X.Y."/>
            <person name="Nesset C.K."/>
            <person name="Damme M."/>
            <person name="Loberg E.M."/>
            <person name="Lubke T."/>
            <person name="Maehlen J."/>
            <person name="Andersson K.B."/>
            <person name="Lorenzo P.I."/>
            <person name="Roos N."/>
            <person name="Thoresen G.H."/>
            <person name="Rustan A.C."/>
            <person name="Kase E.T."/>
            <person name="Eskild W."/>
        </authorList>
    </citation>
    <scope>TISSUE SPECIFICITY</scope>
    <scope>DISRUPTION PHENOTYPE</scope>
</reference>
<reference key="7">
    <citation type="journal article" date="2015" name="PLoS ONE">
        <title>Lack of the Lysosomal Membrane Protein, GLMP, in Mice Results in Metabolic Dysregulation in Liver.</title>
        <authorList>
            <person name="Kong X.Y."/>
            <person name="Kase E.T."/>
            <person name="Herskedal A."/>
            <person name="Schjalm C."/>
            <person name="Damme M."/>
            <person name="Nesset C.K."/>
            <person name="Thoresen G.H."/>
            <person name="Rustan A.C."/>
            <person name="Eskild W."/>
        </authorList>
    </citation>
    <scope>DISRUPTION PHENOTYPE</scope>
</reference>
<reference key="8">
    <citation type="journal article" date="2016" name="Arch. Physiol. Biochem.">
        <title>Increased glucose utilization and decreased fatty acid metabolism in myotubes from Glmp(gt/gt) mice.</title>
        <authorList>
            <person name="Kong X.Y."/>
            <person name="Feng Y.Z."/>
            <person name="Eftestoel E."/>
            <person name="Kase E.T."/>
            <person name="Haugum H."/>
            <person name="Eskild W."/>
            <person name="Rustan A.C."/>
            <person name="Thoresen G.H."/>
        </authorList>
    </citation>
    <scope>TISSUE SPECIFICITY</scope>
    <scope>DISRUPTION PHENOTYPE</scope>
</reference>
<reference key="9">
    <citation type="journal article" date="2016" name="Fibrogenesis Tissue Repair">
        <title>Age-dependent development of liver fibrosis in Glmp (gt/gt) mice.</title>
        <authorList>
            <person name="Nesset C.K."/>
            <person name="Kong X.Y."/>
            <person name="Damme M."/>
            <person name="Schjalm C."/>
            <person name="Roos N."/>
            <person name="Loeberg E.M."/>
            <person name="Eskild W."/>
        </authorList>
    </citation>
    <scope>DEVELOPMENTAL STAGE</scope>
    <scope>DISRUPTION PHENOTYPE</scope>
</reference>
<reference key="10">
    <citation type="journal article" date="2019" name="Elife">
        <title>The lysosomal transporter MFSD1 is essential for liver homeostasis and critically depends on its accessory subunit GLMP.</title>
        <authorList>
            <person name="Massa Lopez D."/>
            <person name="Thelen M."/>
            <person name="Stahl F."/>
            <person name="Thiel C."/>
            <person name="Linhorst A."/>
            <person name="Sylvester M."/>
            <person name="Hermanns-Borgmeyer I."/>
            <person name="Luellmann-Rauch R."/>
            <person name="Eskild W."/>
            <person name="Saftig P."/>
            <person name="Damme M."/>
        </authorList>
    </citation>
    <scope>FUNCTION</scope>
    <scope>INTERACTION WITH MFSD1</scope>
    <scope>SUBCELLULAR LOCATION</scope>
    <scope>DISRUPTION PHENOTYPE</scope>
</reference>
<reference key="11">
    <citation type="journal article" date="2020" name="FASEB J.">
        <title>Characterization of the complex of the lysosomal membrane transporter MFSD1 and its accessory subunit GLMP.</title>
        <authorList>
            <person name="Lopez D.M."/>
            <person name="Kaehlau L."/>
            <person name="Jungnickel K.E.J."/>
            <person name="Loew C."/>
            <person name="Damme M."/>
        </authorList>
    </citation>
    <scope>FUNCTION</scope>
    <scope>INTERACTION WITH MFSD1</scope>
    <scope>GLYCOSYLATION AT ASN-85; ASN-94; ASN-133; ASN-157; ASN-185; ASN-228 AND ASN-331</scope>
    <scope>MUTAGENESIS OF ASN-85; ASN-94; ASN-133; ASN-157; ASN-166; ASN-185; ASN-228; ASN-331 AND TYR-400</scope>
</reference>
<reference evidence="13" key="12">
    <citation type="submission" date="2019-02" db="PDB data bank">
        <title>GLMP is essential for bone-marrow hematopoiesis and lysosomal glycolipid metabolism.</title>
        <authorList>
            <person name="Manzanillo P."/>
            <person name="Huang C.S."/>
            <person name="Boenig G."/>
            <person name="Calses P."/>
            <person name="Scherl A."/>
            <person name="Reichelt M."/>
            <person name="Katakam A.K."/>
            <person name="Martin F."/>
            <person name="Hymowitz S.G."/>
            <person name="Ouyang W."/>
        </authorList>
    </citation>
    <scope>X-RAY CRYSTALLOGRAPHY (1.85 ANGSTROMS)</scope>
</reference>
<organism>
    <name type="scientific">Mus musculus</name>
    <name type="common">Mouse</name>
    <dbReference type="NCBI Taxonomy" id="10090"/>
    <lineage>
        <taxon>Eukaryota</taxon>
        <taxon>Metazoa</taxon>
        <taxon>Chordata</taxon>
        <taxon>Craniata</taxon>
        <taxon>Vertebrata</taxon>
        <taxon>Euteleostomi</taxon>
        <taxon>Mammalia</taxon>
        <taxon>Eutheria</taxon>
        <taxon>Euarchontoglires</taxon>
        <taxon>Glires</taxon>
        <taxon>Rodentia</taxon>
        <taxon>Myomorpha</taxon>
        <taxon>Muroidea</taxon>
        <taxon>Muridae</taxon>
        <taxon>Murinae</taxon>
        <taxon>Mus</taxon>
        <taxon>Mus</taxon>
    </lineage>
</organism>
<name>GLMP_MOUSE</name>
<dbReference type="EMBL" id="AB027141">
    <property type="protein sequence ID" value="BAA92527.1"/>
    <property type="molecule type" value="mRNA"/>
</dbReference>
<dbReference type="EMBL" id="AB027142">
    <property type="protein sequence ID" value="BAA95676.1"/>
    <property type="molecule type" value="mRNA"/>
</dbReference>
<dbReference type="EMBL" id="AK075614">
    <property type="protein sequence ID" value="BAC35859.1"/>
    <property type="molecule type" value="mRNA"/>
</dbReference>
<dbReference type="EMBL" id="AK150794">
    <property type="protein sequence ID" value="BAE29857.1"/>
    <property type="molecule type" value="mRNA"/>
</dbReference>
<dbReference type="EMBL" id="AK154340">
    <property type="protein sequence ID" value="BAE32526.1"/>
    <property type="molecule type" value="mRNA"/>
</dbReference>
<dbReference type="EMBL" id="AK160793">
    <property type="protein sequence ID" value="BAE36016.1"/>
    <property type="molecule type" value="mRNA"/>
</dbReference>
<dbReference type="EMBL" id="AK170696">
    <property type="protein sequence ID" value="BAE41960.1"/>
    <property type="molecule type" value="mRNA"/>
</dbReference>
<dbReference type="EMBL" id="AK171042">
    <property type="protein sequence ID" value="BAE42207.1"/>
    <property type="molecule type" value="mRNA"/>
</dbReference>
<dbReference type="EMBL" id="BC021547">
    <property type="protein sequence ID" value="AAH21547.1"/>
    <property type="molecule type" value="mRNA"/>
</dbReference>
<dbReference type="CCDS" id="CCDS17469.1"/>
<dbReference type="RefSeq" id="NP_064387.1">
    <property type="nucleotide sequence ID" value="NM_020003.1"/>
</dbReference>
<dbReference type="PDB" id="6NYQ">
    <property type="method" value="X-ray"/>
    <property type="resolution" value="1.85 A"/>
    <property type="chains" value="C=1-404"/>
</dbReference>
<dbReference type="PDB" id="8R8Q">
    <property type="method" value="EM"/>
    <property type="resolution" value="4.08 A"/>
    <property type="chains" value="B=1-391"/>
</dbReference>
<dbReference type="PDBsum" id="6NYQ"/>
<dbReference type="PDBsum" id="8R8Q"/>
<dbReference type="EMDB" id="EMD-19006"/>
<dbReference type="SMR" id="Q9JHJ3"/>
<dbReference type="FunCoup" id="Q9JHJ3">
    <property type="interactions" value="1669"/>
</dbReference>
<dbReference type="IntAct" id="Q9JHJ3">
    <property type="interactions" value="3"/>
</dbReference>
<dbReference type="STRING" id="10090.ENSMUSP00000135398"/>
<dbReference type="GlyConnect" id="2357">
    <property type="glycosylation" value="1 N-Linked glycan (1 site)"/>
</dbReference>
<dbReference type="GlyCosmos" id="Q9JHJ3">
    <property type="glycosylation" value="9 sites, 1 glycan"/>
</dbReference>
<dbReference type="GlyGen" id="Q9JHJ3">
    <property type="glycosylation" value="10 sites, 4 N-linked glycans (3 sites)"/>
</dbReference>
<dbReference type="iPTMnet" id="Q9JHJ3"/>
<dbReference type="PhosphoSitePlus" id="Q9JHJ3"/>
<dbReference type="jPOST" id="Q9JHJ3"/>
<dbReference type="PaxDb" id="10090-ENSMUSP00000135398"/>
<dbReference type="PeptideAtlas" id="Q9JHJ3"/>
<dbReference type="ProteomicsDB" id="263367"/>
<dbReference type="Pumba" id="Q9JHJ3"/>
<dbReference type="ABCD" id="Q9JHJ3">
    <property type="antibodies" value="7 sequenced antibodies"/>
</dbReference>
<dbReference type="Antibodypedia" id="34210">
    <property type="antibodies" value="43 antibodies from 11 providers"/>
</dbReference>
<dbReference type="Ensembl" id="ENSMUST00000177005.8">
    <property type="protein sequence ID" value="ENSMUSP00000135398.2"/>
    <property type="gene ID" value="ENSMUSG00000001418.14"/>
</dbReference>
<dbReference type="GeneID" id="56700"/>
<dbReference type="KEGG" id="mmu:56700"/>
<dbReference type="UCSC" id="uc008pup.1">
    <property type="organism name" value="mouse"/>
</dbReference>
<dbReference type="AGR" id="MGI:1913318"/>
<dbReference type="CTD" id="112770"/>
<dbReference type="MGI" id="MGI:1913318">
    <property type="gene designation" value="Glmp"/>
</dbReference>
<dbReference type="VEuPathDB" id="HostDB:ENSMUSG00000001418"/>
<dbReference type="eggNOG" id="ENOG502QSBM">
    <property type="taxonomic scope" value="Eukaryota"/>
</dbReference>
<dbReference type="GeneTree" id="ENSGT00390000005131"/>
<dbReference type="InParanoid" id="Q9JHJ3"/>
<dbReference type="OMA" id="TLHYLWD"/>
<dbReference type="OrthoDB" id="6264340at2759"/>
<dbReference type="PhylomeDB" id="Q9JHJ3"/>
<dbReference type="TreeFam" id="TF324431"/>
<dbReference type="BioGRID-ORCS" id="56700">
    <property type="hits" value="4 hits in 79 CRISPR screens"/>
</dbReference>
<dbReference type="ChiTaRS" id="Glmp">
    <property type="organism name" value="mouse"/>
</dbReference>
<dbReference type="PRO" id="PR:Q9JHJ3"/>
<dbReference type="Proteomes" id="UP000000589">
    <property type="component" value="Chromosome 3"/>
</dbReference>
<dbReference type="RNAct" id="Q9JHJ3">
    <property type="molecule type" value="protein"/>
</dbReference>
<dbReference type="Bgee" id="ENSMUSG00000001418">
    <property type="expression patterns" value="Expressed in ileal epithelium and 264 other cell types or tissues"/>
</dbReference>
<dbReference type="ExpressionAtlas" id="Q9JHJ3">
    <property type="expression patterns" value="baseline and differential"/>
</dbReference>
<dbReference type="GO" id="GO:0005829">
    <property type="term" value="C:cytosol"/>
    <property type="evidence" value="ECO:0007669"/>
    <property type="project" value="Ensembl"/>
</dbReference>
<dbReference type="GO" id="GO:0005765">
    <property type="term" value="C:lysosomal membrane"/>
    <property type="evidence" value="ECO:0007669"/>
    <property type="project" value="UniProtKB-SubCell"/>
</dbReference>
<dbReference type="GO" id="GO:0005764">
    <property type="term" value="C:lysosome"/>
    <property type="evidence" value="ECO:0000314"/>
    <property type="project" value="UniProtKB"/>
</dbReference>
<dbReference type="GO" id="GO:0016020">
    <property type="term" value="C:membrane"/>
    <property type="evidence" value="ECO:0000314"/>
    <property type="project" value="UniProtKB"/>
</dbReference>
<dbReference type="GO" id="GO:0005634">
    <property type="term" value="C:nucleus"/>
    <property type="evidence" value="ECO:0007669"/>
    <property type="project" value="Ensembl"/>
</dbReference>
<dbReference type="GO" id="GO:0045944">
    <property type="term" value="P:positive regulation of transcription by RNA polymerase II"/>
    <property type="evidence" value="ECO:0007669"/>
    <property type="project" value="Ensembl"/>
</dbReference>
<dbReference type="GO" id="GO:0061462">
    <property type="term" value="P:protein localization to lysosome"/>
    <property type="evidence" value="ECO:0000315"/>
    <property type="project" value="UniProtKB"/>
</dbReference>
<dbReference type="GO" id="GO:0050821">
    <property type="term" value="P:protein stabilization"/>
    <property type="evidence" value="ECO:0000315"/>
    <property type="project" value="UniProtKB"/>
</dbReference>
<dbReference type="InterPro" id="IPR029382">
    <property type="entry name" value="NCU-G1"/>
</dbReference>
<dbReference type="PANTHER" id="PTHR31981">
    <property type="entry name" value="GLYCOSYLATED LYSOSOMAL MEMBRANE PROTEIN"/>
    <property type="match status" value="1"/>
</dbReference>
<dbReference type="PANTHER" id="PTHR31981:SF1">
    <property type="entry name" value="GLYCOSYLATED LYSOSOMAL MEMBRANE PROTEIN"/>
    <property type="match status" value="1"/>
</dbReference>
<dbReference type="Pfam" id="PF15065">
    <property type="entry name" value="NCU-G1"/>
    <property type="match status" value="1"/>
</dbReference>
<keyword id="KW-0002">3D-structure</keyword>
<keyword id="KW-0325">Glycoprotein</keyword>
<keyword id="KW-0458">Lysosome</keyword>
<keyword id="KW-0472">Membrane</keyword>
<keyword id="KW-1185">Reference proteome</keyword>
<keyword id="KW-0732">Signal</keyword>
<keyword id="KW-0812">Transmembrane</keyword>
<keyword id="KW-1133">Transmembrane helix</keyword>
<evidence type="ECO:0000255" key="1"/>
<evidence type="ECO:0000269" key="2">
    <source>
    </source>
</evidence>
<evidence type="ECO:0000269" key="3">
    <source>
    </source>
</evidence>
<evidence type="ECO:0000269" key="4">
    <source>
    </source>
</evidence>
<evidence type="ECO:0000269" key="5">
    <source>
    </source>
</evidence>
<evidence type="ECO:0000269" key="6">
    <source>
    </source>
</evidence>
<evidence type="ECO:0000269" key="7">
    <source>
    </source>
</evidence>
<evidence type="ECO:0000269" key="8">
    <source>
    </source>
</evidence>
<evidence type="ECO:0000269" key="9">
    <source>
    </source>
</evidence>
<evidence type="ECO:0000269" key="10">
    <source>
    </source>
</evidence>
<evidence type="ECO:0000305" key="11"/>
<evidence type="ECO:0000312" key="12">
    <source>
        <dbReference type="MGI" id="MGI:1913318"/>
    </source>
</evidence>
<evidence type="ECO:0007744" key="13">
    <source>
        <dbReference type="PDB" id="6NYQ"/>
    </source>
</evidence>
<evidence type="ECO:0007829" key="14">
    <source>
        <dbReference type="PDB" id="6NYQ"/>
    </source>
</evidence>
<accession>Q9JHJ3</accession>
<accession>Q3TUF5</accession>
<accession>Q3UBV7</accession>
<accession>Q8C6H7</accession>